<gene>
    <name type="ordered locus">Lm4b_01511</name>
</gene>
<organism>
    <name type="scientific">Listeria monocytogenes serotype 4b (strain CLIP80459)</name>
    <dbReference type="NCBI Taxonomy" id="568819"/>
    <lineage>
        <taxon>Bacteria</taxon>
        <taxon>Bacillati</taxon>
        <taxon>Bacillota</taxon>
        <taxon>Bacilli</taxon>
        <taxon>Bacillales</taxon>
        <taxon>Listeriaceae</taxon>
        <taxon>Listeria</taxon>
    </lineage>
</organism>
<feature type="chain" id="PRO_1000215323" description="UPF0473 protein Lm4b_01511">
    <location>
        <begin position="1"/>
        <end position="100"/>
    </location>
</feature>
<proteinExistence type="inferred from homology"/>
<name>Y1511_LISMC</name>
<dbReference type="EMBL" id="FM242711">
    <property type="protein sequence ID" value="CAS05273.1"/>
    <property type="molecule type" value="Genomic_DNA"/>
</dbReference>
<dbReference type="RefSeq" id="WP_003722010.1">
    <property type="nucleotide sequence ID" value="NC_012488.1"/>
</dbReference>
<dbReference type="KEGG" id="lmc:Lm4b_01511"/>
<dbReference type="HOGENOM" id="CLU_146610_2_1_9"/>
<dbReference type="HAMAP" id="MF_01448">
    <property type="entry name" value="UPF0473"/>
    <property type="match status" value="1"/>
</dbReference>
<dbReference type="InterPro" id="IPR009711">
    <property type="entry name" value="UPF0473"/>
</dbReference>
<dbReference type="NCBIfam" id="NF010217">
    <property type="entry name" value="PRK13678.1-4"/>
    <property type="match status" value="1"/>
</dbReference>
<dbReference type="PANTHER" id="PTHR40066">
    <property type="entry name" value="UPF0473 PROTEIN CBO2561/CLC_2432"/>
    <property type="match status" value="1"/>
</dbReference>
<dbReference type="PANTHER" id="PTHR40066:SF1">
    <property type="entry name" value="UPF0473 PROTEIN CBO2561_CLC_2432"/>
    <property type="match status" value="1"/>
</dbReference>
<dbReference type="Pfam" id="PF06949">
    <property type="entry name" value="DUF1292"/>
    <property type="match status" value="1"/>
</dbReference>
<accession>C1KVE8</accession>
<comment type="similarity">
    <text evidence="1">Belongs to the UPF0473 family.</text>
</comment>
<reference key="1">
    <citation type="journal article" date="2012" name="BMC Genomics">
        <title>Comparative genomics and transcriptomics of lineages I, II, and III strains of Listeria monocytogenes.</title>
        <authorList>
            <person name="Hain T."/>
            <person name="Ghai R."/>
            <person name="Billion A."/>
            <person name="Kuenne C.T."/>
            <person name="Steinweg C."/>
            <person name="Izar B."/>
            <person name="Mohamed W."/>
            <person name="Mraheil M."/>
            <person name="Domann E."/>
            <person name="Schaffrath S."/>
            <person name="Karst U."/>
            <person name="Goesmann A."/>
            <person name="Oehm S."/>
            <person name="Puhler A."/>
            <person name="Merkl R."/>
            <person name="Vorwerk S."/>
            <person name="Glaser P."/>
            <person name="Garrido P."/>
            <person name="Rusniok C."/>
            <person name="Buchrieser C."/>
            <person name="Goebel W."/>
            <person name="Chakraborty T."/>
        </authorList>
    </citation>
    <scope>NUCLEOTIDE SEQUENCE [LARGE SCALE GENOMIC DNA]</scope>
    <source>
        <strain>CLIP80459</strain>
    </source>
</reference>
<protein>
    <recommendedName>
        <fullName evidence="1">UPF0473 protein Lm4b_01511</fullName>
    </recommendedName>
</protein>
<evidence type="ECO:0000255" key="1">
    <source>
        <dbReference type="HAMAP-Rule" id="MF_01448"/>
    </source>
</evidence>
<sequence>MAEEHNHNHEEENIIWITNEEGKEEAYEILFDFDSEDFDKSYVLYFPAGKGEDEEIEILASSYIQDEEGKQGQLKPVETDEEWDMIEEILATFLADEDEE</sequence>